<dbReference type="EC" id="3.1.26.4" evidence="1"/>
<dbReference type="EMBL" id="AM412317">
    <property type="protein sequence ID" value="CAL83991.1"/>
    <property type="molecule type" value="Genomic_DNA"/>
</dbReference>
<dbReference type="EMBL" id="CP000727">
    <property type="protein sequence ID" value="ABS36770.1"/>
    <property type="molecule type" value="Genomic_DNA"/>
</dbReference>
<dbReference type="RefSeq" id="YP_001254940.1">
    <property type="nucleotide sequence ID" value="NC_009495.1"/>
</dbReference>
<dbReference type="RefSeq" id="YP_001388133.1">
    <property type="nucleotide sequence ID" value="NC_009698.1"/>
</dbReference>
<dbReference type="SMR" id="A5I4L9"/>
<dbReference type="GeneID" id="5186696"/>
<dbReference type="KEGG" id="cbh:CLC_2289"/>
<dbReference type="KEGG" id="cbo:CBO2441"/>
<dbReference type="PATRIC" id="fig|413999.7.peg.2418"/>
<dbReference type="HOGENOM" id="CLU_036532_2_1_9"/>
<dbReference type="PRO" id="PR:A5I4L9"/>
<dbReference type="Proteomes" id="UP000001986">
    <property type="component" value="Chromosome"/>
</dbReference>
<dbReference type="GO" id="GO:0005737">
    <property type="term" value="C:cytoplasm"/>
    <property type="evidence" value="ECO:0007669"/>
    <property type="project" value="UniProtKB-SubCell"/>
</dbReference>
<dbReference type="GO" id="GO:0032299">
    <property type="term" value="C:ribonuclease H2 complex"/>
    <property type="evidence" value="ECO:0000318"/>
    <property type="project" value="GO_Central"/>
</dbReference>
<dbReference type="GO" id="GO:0030145">
    <property type="term" value="F:manganese ion binding"/>
    <property type="evidence" value="ECO:0007669"/>
    <property type="project" value="UniProtKB-UniRule"/>
</dbReference>
<dbReference type="GO" id="GO:0003723">
    <property type="term" value="F:RNA binding"/>
    <property type="evidence" value="ECO:0007669"/>
    <property type="project" value="InterPro"/>
</dbReference>
<dbReference type="GO" id="GO:0004523">
    <property type="term" value="F:RNA-DNA hybrid ribonuclease activity"/>
    <property type="evidence" value="ECO:0000318"/>
    <property type="project" value="GO_Central"/>
</dbReference>
<dbReference type="GO" id="GO:0043137">
    <property type="term" value="P:DNA replication, removal of RNA primer"/>
    <property type="evidence" value="ECO:0000318"/>
    <property type="project" value="GO_Central"/>
</dbReference>
<dbReference type="GO" id="GO:0006298">
    <property type="term" value="P:mismatch repair"/>
    <property type="evidence" value="ECO:0000318"/>
    <property type="project" value="GO_Central"/>
</dbReference>
<dbReference type="CDD" id="cd07182">
    <property type="entry name" value="RNase_HII_bacteria_HII_like"/>
    <property type="match status" value="1"/>
</dbReference>
<dbReference type="FunFam" id="3.30.420.10:FF:000113">
    <property type="entry name" value="Ribonuclease HII"/>
    <property type="match status" value="1"/>
</dbReference>
<dbReference type="Gene3D" id="3.30.420.10">
    <property type="entry name" value="Ribonuclease H-like superfamily/Ribonuclease H"/>
    <property type="match status" value="1"/>
</dbReference>
<dbReference type="HAMAP" id="MF_00052_B">
    <property type="entry name" value="RNase_HII_B"/>
    <property type="match status" value="1"/>
</dbReference>
<dbReference type="InterPro" id="IPR022898">
    <property type="entry name" value="RNase_HII"/>
</dbReference>
<dbReference type="InterPro" id="IPR001352">
    <property type="entry name" value="RNase_HII/HIII"/>
</dbReference>
<dbReference type="InterPro" id="IPR024567">
    <property type="entry name" value="RNase_HII/HIII_dom"/>
</dbReference>
<dbReference type="InterPro" id="IPR012337">
    <property type="entry name" value="RNaseH-like_sf"/>
</dbReference>
<dbReference type="InterPro" id="IPR036397">
    <property type="entry name" value="RNaseH_sf"/>
</dbReference>
<dbReference type="NCBIfam" id="NF000594">
    <property type="entry name" value="PRK00015.1-1"/>
    <property type="match status" value="1"/>
</dbReference>
<dbReference type="NCBIfam" id="NF000595">
    <property type="entry name" value="PRK00015.1-3"/>
    <property type="match status" value="1"/>
</dbReference>
<dbReference type="PANTHER" id="PTHR10954">
    <property type="entry name" value="RIBONUCLEASE H2 SUBUNIT A"/>
    <property type="match status" value="1"/>
</dbReference>
<dbReference type="PANTHER" id="PTHR10954:SF18">
    <property type="entry name" value="RIBONUCLEASE HII"/>
    <property type="match status" value="1"/>
</dbReference>
<dbReference type="Pfam" id="PF01351">
    <property type="entry name" value="RNase_HII"/>
    <property type="match status" value="1"/>
</dbReference>
<dbReference type="SUPFAM" id="SSF53098">
    <property type="entry name" value="Ribonuclease H-like"/>
    <property type="match status" value="1"/>
</dbReference>
<dbReference type="PROSITE" id="PS51975">
    <property type="entry name" value="RNASE_H_2"/>
    <property type="match status" value="1"/>
</dbReference>
<reference key="1">
    <citation type="journal article" date="2007" name="Genome Res.">
        <title>Genome sequence of a proteolytic (Group I) Clostridium botulinum strain Hall A and comparative analysis of the clostridial genomes.</title>
        <authorList>
            <person name="Sebaihia M."/>
            <person name="Peck M.W."/>
            <person name="Minton N.P."/>
            <person name="Thomson N.R."/>
            <person name="Holden M.T.G."/>
            <person name="Mitchell W.J."/>
            <person name="Carter A.T."/>
            <person name="Bentley S.D."/>
            <person name="Mason D.R."/>
            <person name="Crossman L."/>
            <person name="Paul C.J."/>
            <person name="Ivens A."/>
            <person name="Wells-Bennik M.H.J."/>
            <person name="Davis I.J."/>
            <person name="Cerdeno-Tarraga A.M."/>
            <person name="Churcher C."/>
            <person name="Quail M.A."/>
            <person name="Chillingworth T."/>
            <person name="Feltwell T."/>
            <person name="Fraser A."/>
            <person name="Goodhead I."/>
            <person name="Hance Z."/>
            <person name="Jagels K."/>
            <person name="Larke N."/>
            <person name="Maddison M."/>
            <person name="Moule S."/>
            <person name="Mungall K."/>
            <person name="Norbertczak H."/>
            <person name="Rabbinowitsch E."/>
            <person name="Sanders M."/>
            <person name="Simmonds M."/>
            <person name="White B."/>
            <person name="Whithead S."/>
            <person name="Parkhill J."/>
        </authorList>
    </citation>
    <scope>NUCLEOTIDE SEQUENCE [LARGE SCALE GENOMIC DNA]</scope>
    <source>
        <strain>Hall / ATCC 3502 / NCTC 13319 / Type A</strain>
    </source>
</reference>
<reference key="2">
    <citation type="journal article" date="2007" name="PLoS ONE">
        <title>Analysis of the neurotoxin complex genes in Clostridium botulinum A1-A4 and B1 strains: BoNT/A3, /Ba4 and /B1 clusters are located within plasmids.</title>
        <authorList>
            <person name="Smith T.J."/>
            <person name="Hill K.K."/>
            <person name="Foley B.T."/>
            <person name="Detter J.C."/>
            <person name="Munk A.C."/>
            <person name="Bruce D.C."/>
            <person name="Doggett N.A."/>
            <person name="Smith L.A."/>
            <person name="Marks J.D."/>
            <person name="Xie G."/>
            <person name="Brettin T.S."/>
        </authorList>
    </citation>
    <scope>NUCLEOTIDE SEQUENCE [LARGE SCALE GENOMIC DNA]</scope>
    <source>
        <strain>Hall / ATCC 3502 / NCTC 13319 / Type A</strain>
    </source>
</reference>
<protein>
    <recommendedName>
        <fullName evidence="1">Ribonuclease HII</fullName>
        <shortName evidence="1">RNase HII</shortName>
        <ecNumber evidence="1">3.1.26.4</ecNumber>
    </recommendedName>
</protein>
<comment type="function">
    <text evidence="1">Endonuclease that specifically degrades the RNA of RNA-DNA hybrids.</text>
</comment>
<comment type="catalytic activity">
    <reaction evidence="1">
        <text>Endonucleolytic cleavage to 5'-phosphomonoester.</text>
        <dbReference type="EC" id="3.1.26.4"/>
    </reaction>
</comment>
<comment type="cofactor">
    <cofactor evidence="1">
        <name>Mn(2+)</name>
        <dbReference type="ChEBI" id="CHEBI:29035"/>
    </cofactor>
    <cofactor evidence="1">
        <name>Mg(2+)</name>
        <dbReference type="ChEBI" id="CHEBI:18420"/>
    </cofactor>
    <text evidence="1">Manganese or magnesium. Binds 1 divalent metal ion per monomer in the absence of substrate. May bind a second metal ion after substrate binding.</text>
</comment>
<comment type="subcellular location">
    <subcellularLocation>
        <location evidence="1">Cytoplasm</location>
    </subcellularLocation>
</comment>
<comment type="similarity">
    <text evidence="1">Belongs to the RNase HII family.</text>
</comment>
<proteinExistence type="inferred from homology"/>
<feature type="chain" id="PRO_0000334878" description="Ribonuclease HII">
    <location>
        <begin position="1"/>
        <end position="269"/>
    </location>
</feature>
<feature type="domain" description="RNase H type-2" evidence="2">
    <location>
        <begin position="83"/>
        <end position="269"/>
    </location>
</feature>
<feature type="binding site" evidence="1">
    <location>
        <position position="89"/>
    </location>
    <ligand>
        <name>a divalent metal cation</name>
        <dbReference type="ChEBI" id="CHEBI:60240"/>
    </ligand>
</feature>
<feature type="binding site" evidence="1">
    <location>
        <position position="90"/>
    </location>
    <ligand>
        <name>a divalent metal cation</name>
        <dbReference type="ChEBI" id="CHEBI:60240"/>
    </ligand>
</feature>
<feature type="binding site" evidence="1">
    <location>
        <position position="185"/>
    </location>
    <ligand>
        <name>a divalent metal cation</name>
        <dbReference type="ChEBI" id="CHEBI:60240"/>
    </ligand>
</feature>
<feature type="sequence conflict" description="In Ref. 2; ABS36770." evidence="3" ref="2">
    <original>I</original>
    <variation>V</variation>
    <location>
        <position position="117"/>
    </location>
</feature>
<name>RNH2_CLOBH</name>
<accession>A5I4L9</accession>
<accession>A7G5R8</accession>
<sequence>MNLNNLENIRYNEIKEFSDKIKKEFTFSQKKQVMDIIEKLNKDSRKNVIKLGQALEKFLNKYEEELKRTNNMYNFDRRYGNNYLIAGVDEVGRGPLAGPIVAAAVVLDLNVEEMQRIFNIKDSKKLSEKKREELDIIIREKAISYNIALVDNKTIDERGISWSNNEVLKRAVEGLKVKPDLVLSDGYAVKNLNIRNEFIIKGDSKSISIASSSIIAKVYRDSMMKEYSKGLNMYGFNHNAGYGTEEHVQAIKKHGPSKIHRMSFLTNIL</sequence>
<organism>
    <name type="scientific">Clostridium botulinum (strain Hall / ATCC 3502 / NCTC 13319 / Type A)</name>
    <dbReference type="NCBI Taxonomy" id="441771"/>
    <lineage>
        <taxon>Bacteria</taxon>
        <taxon>Bacillati</taxon>
        <taxon>Bacillota</taxon>
        <taxon>Clostridia</taxon>
        <taxon>Eubacteriales</taxon>
        <taxon>Clostridiaceae</taxon>
        <taxon>Clostridium</taxon>
    </lineage>
</organism>
<evidence type="ECO:0000255" key="1">
    <source>
        <dbReference type="HAMAP-Rule" id="MF_00052"/>
    </source>
</evidence>
<evidence type="ECO:0000255" key="2">
    <source>
        <dbReference type="PROSITE-ProRule" id="PRU01319"/>
    </source>
</evidence>
<evidence type="ECO:0000305" key="3"/>
<keyword id="KW-0963">Cytoplasm</keyword>
<keyword id="KW-0255">Endonuclease</keyword>
<keyword id="KW-0378">Hydrolase</keyword>
<keyword id="KW-0464">Manganese</keyword>
<keyword id="KW-0479">Metal-binding</keyword>
<keyword id="KW-0540">Nuclease</keyword>
<keyword id="KW-1185">Reference proteome</keyword>
<gene>
    <name evidence="1" type="primary">rnhB</name>
    <name type="ordered locus">CBO2441</name>
    <name type="ordered locus">CLC_2289</name>
</gene>